<reference key="1">
    <citation type="submission" date="2008-06" db="EMBL/GenBank/DDBJ databases">
        <title>Complete sequence of Stenotrophomonas maltophilia R551-3.</title>
        <authorList>
            <consortium name="US DOE Joint Genome Institute"/>
            <person name="Lucas S."/>
            <person name="Copeland A."/>
            <person name="Lapidus A."/>
            <person name="Glavina del Rio T."/>
            <person name="Dalin E."/>
            <person name="Tice H."/>
            <person name="Pitluck S."/>
            <person name="Chain P."/>
            <person name="Malfatti S."/>
            <person name="Shin M."/>
            <person name="Vergez L."/>
            <person name="Lang D."/>
            <person name="Schmutz J."/>
            <person name="Larimer F."/>
            <person name="Land M."/>
            <person name="Hauser L."/>
            <person name="Kyrpides N."/>
            <person name="Mikhailova N."/>
            <person name="Taghavi S."/>
            <person name="Monchy S."/>
            <person name="Newman L."/>
            <person name="Vangronsveld J."/>
            <person name="van der Lelie D."/>
            <person name="Richardson P."/>
        </authorList>
    </citation>
    <scope>NUCLEOTIDE SEQUENCE [LARGE SCALE GENOMIC DNA]</scope>
    <source>
        <strain>R551-3</strain>
    </source>
</reference>
<feature type="chain" id="PRO_1000141925" description="Large ribosomal subunit protein uL3">
    <location>
        <begin position="1"/>
        <end position="216"/>
    </location>
</feature>
<feature type="modified residue" description="N5-methylglutamine" evidence="1">
    <location>
        <position position="157"/>
    </location>
</feature>
<accession>B4SKW3</accession>
<sequence length="216" mass="22876">MTKKYSLGFVGRKAGMSRVFTEDGRSIPVTLIEATPNRIAQIKTVETDGYSAVQVTVGARRAALVNKPEAGHFAKAKVEAGRGLWEFRVEDAQLGDFAVGGEVKADIFEVGQIVDVQGVTKGKGFQGTIKRHNFRMGDATHGNSLSHRAPGSLGQRQTPGRVFPGKKMSGHMGAVQQSTQNLEVVKVDVERGLIAVRGAVPGAAGGDVIVRPASKA</sequence>
<gene>
    <name evidence="1" type="primary">rplC</name>
    <name type="ordered locus">Smal_0756</name>
</gene>
<dbReference type="EMBL" id="CP001111">
    <property type="protein sequence ID" value="ACF50461.1"/>
    <property type="molecule type" value="Genomic_DNA"/>
</dbReference>
<dbReference type="RefSeq" id="WP_004145336.1">
    <property type="nucleotide sequence ID" value="NC_011071.1"/>
</dbReference>
<dbReference type="SMR" id="B4SKW3"/>
<dbReference type="STRING" id="391008.Smal_0756"/>
<dbReference type="GeneID" id="97259934"/>
<dbReference type="KEGG" id="smt:Smal_0756"/>
<dbReference type="eggNOG" id="COG0087">
    <property type="taxonomic scope" value="Bacteria"/>
</dbReference>
<dbReference type="HOGENOM" id="CLU_044142_4_1_6"/>
<dbReference type="OrthoDB" id="9806135at2"/>
<dbReference type="Proteomes" id="UP000001867">
    <property type="component" value="Chromosome"/>
</dbReference>
<dbReference type="GO" id="GO:0022625">
    <property type="term" value="C:cytosolic large ribosomal subunit"/>
    <property type="evidence" value="ECO:0007669"/>
    <property type="project" value="TreeGrafter"/>
</dbReference>
<dbReference type="GO" id="GO:0019843">
    <property type="term" value="F:rRNA binding"/>
    <property type="evidence" value="ECO:0007669"/>
    <property type="project" value="UniProtKB-UniRule"/>
</dbReference>
<dbReference type="GO" id="GO:0003735">
    <property type="term" value="F:structural constituent of ribosome"/>
    <property type="evidence" value="ECO:0007669"/>
    <property type="project" value="InterPro"/>
</dbReference>
<dbReference type="GO" id="GO:0006412">
    <property type="term" value="P:translation"/>
    <property type="evidence" value="ECO:0007669"/>
    <property type="project" value="UniProtKB-UniRule"/>
</dbReference>
<dbReference type="FunFam" id="2.40.30.10:FF:000004">
    <property type="entry name" value="50S ribosomal protein L3"/>
    <property type="match status" value="1"/>
</dbReference>
<dbReference type="FunFam" id="3.30.160.810:FF:000001">
    <property type="entry name" value="50S ribosomal protein L3"/>
    <property type="match status" value="1"/>
</dbReference>
<dbReference type="Gene3D" id="3.30.160.810">
    <property type="match status" value="1"/>
</dbReference>
<dbReference type="Gene3D" id="2.40.30.10">
    <property type="entry name" value="Translation factors"/>
    <property type="match status" value="1"/>
</dbReference>
<dbReference type="HAMAP" id="MF_01325_B">
    <property type="entry name" value="Ribosomal_uL3_B"/>
    <property type="match status" value="1"/>
</dbReference>
<dbReference type="InterPro" id="IPR000597">
    <property type="entry name" value="Ribosomal_uL3"/>
</dbReference>
<dbReference type="InterPro" id="IPR019927">
    <property type="entry name" value="Ribosomal_uL3_bac/org-type"/>
</dbReference>
<dbReference type="InterPro" id="IPR019926">
    <property type="entry name" value="Ribosomal_uL3_CS"/>
</dbReference>
<dbReference type="InterPro" id="IPR009000">
    <property type="entry name" value="Transl_B-barrel_sf"/>
</dbReference>
<dbReference type="NCBIfam" id="TIGR03625">
    <property type="entry name" value="L3_bact"/>
    <property type="match status" value="1"/>
</dbReference>
<dbReference type="PANTHER" id="PTHR11229">
    <property type="entry name" value="50S RIBOSOMAL PROTEIN L3"/>
    <property type="match status" value="1"/>
</dbReference>
<dbReference type="PANTHER" id="PTHR11229:SF16">
    <property type="entry name" value="LARGE RIBOSOMAL SUBUNIT PROTEIN UL3C"/>
    <property type="match status" value="1"/>
</dbReference>
<dbReference type="Pfam" id="PF00297">
    <property type="entry name" value="Ribosomal_L3"/>
    <property type="match status" value="1"/>
</dbReference>
<dbReference type="SUPFAM" id="SSF50447">
    <property type="entry name" value="Translation proteins"/>
    <property type="match status" value="1"/>
</dbReference>
<dbReference type="PROSITE" id="PS00474">
    <property type="entry name" value="RIBOSOMAL_L3"/>
    <property type="match status" value="1"/>
</dbReference>
<protein>
    <recommendedName>
        <fullName evidence="1">Large ribosomal subunit protein uL3</fullName>
    </recommendedName>
    <alternativeName>
        <fullName evidence="2">50S ribosomal protein L3</fullName>
    </alternativeName>
</protein>
<name>RL3_STRM5</name>
<keyword id="KW-0488">Methylation</keyword>
<keyword id="KW-0687">Ribonucleoprotein</keyword>
<keyword id="KW-0689">Ribosomal protein</keyword>
<keyword id="KW-0694">RNA-binding</keyword>
<keyword id="KW-0699">rRNA-binding</keyword>
<evidence type="ECO:0000255" key="1">
    <source>
        <dbReference type="HAMAP-Rule" id="MF_01325"/>
    </source>
</evidence>
<evidence type="ECO:0000305" key="2"/>
<organism>
    <name type="scientific">Stenotrophomonas maltophilia (strain R551-3)</name>
    <dbReference type="NCBI Taxonomy" id="391008"/>
    <lineage>
        <taxon>Bacteria</taxon>
        <taxon>Pseudomonadati</taxon>
        <taxon>Pseudomonadota</taxon>
        <taxon>Gammaproteobacteria</taxon>
        <taxon>Lysobacterales</taxon>
        <taxon>Lysobacteraceae</taxon>
        <taxon>Stenotrophomonas</taxon>
        <taxon>Stenotrophomonas maltophilia group</taxon>
    </lineage>
</organism>
<proteinExistence type="inferred from homology"/>
<comment type="function">
    <text evidence="1">One of the primary rRNA binding proteins, it binds directly near the 3'-end of the 23S rRNA, where it nucleates assembly of the 50S subunit.</text>
</comment>
<comment type="subunit">
    <text evidence="1">Part of the 50S ribosomal subunit. Forms a cluster with proteins L14 and L19.</text>
</comment>
<comment type="PTM">
    <text evidence="1">Methylated by PrmB.</text>
</comment>
<comment type="similarity">
    <text evidence="1">Belongs to the universal ribosomal protein uL3 family.</text>
</comment>